<organism>
    <name type="scientific">Bothrops jararaca</name>
    <name type="common">Jararaca</name>
    <name type="synonym">Bothrops jajaraca</name>
    <dbReference type="NCBI Taxonomy" id="8724"/>
    <lineage>
        <taxon>Eukaryota</taxon>
        <taxon>Metazoa</taxon>
        <taxon>Chordata</taxon>
        <taxon>Craniata</taxon>
        <taxon>Vertebrata</taxon>
        <taxon>Euteleostomi</taxon>
        <taxon>Lepidosauria</taxon>
        <taxon>Squamata</taxon>
        <taxon>Bifurcata</taxon>
        <taxon>Unidentata</taxon>
        <taxon>Episquamata</taxon>
        <taxon>Toxicofera</taxon>
        <taxon>Serpentes</taxon>
        <taxon>Colubroidea</taxon>
        <taxon>Viperidae</taxon>
        <taxon>Crotalinae</taxon>
        <taxon>Bothrops</taxon>
    </lineage>
</organism>
<feature type="peptide" id="PRO_0000421914" description="Bradykinin-potentiating peptide 11g">
    <location>
        <begin position="1"/>
        <end position="11"/>
    </location>
</feature>
<feature type="modified residue" description="Pyrrolidone carboxylic acid" evidence="2">
    <location>
        <position position="1"/>
    </location>
</feature>
<feature type="unsure residue" description="K or Q">
    <location>
        <position position="8"/>
    </location>
</feature>
<feature type="unsure residue" description="I or L">
    <location>
        <position position="9"/>
    </location>
</feature>
<reference key="1">
    <citation type="journal article" date="2012" name="Mol. Cell. Proteomics">
        <title>Peptidomics of three Bothrops snake venoms: insights into the molecular diversification of proteomes and peptidomes.</title>
        <authorList>
            <person name="Tashima A.K."/>
            <person name="Zelanis A."/>
            <person name="Kitano E.S."/>
            <person name="Ianzer D."/>
            <person name="Melo R.L."/>
            <person name="Rioli V."/>
            <person name="Sant'anna S.S."/>
            <person name="Schenberg A.C."/>
            <person name="Camargo A.C."/>
            <person name="Serrano S.M.T."/>
        </authorList>
    </citation>
    <scope>PROTEIN SEQUENCE</scope>
    <scope>FUNCTION</scope>
    <scope>PYROGLUTAMATE FORMATION AT GLN-1</scope>
    <scope>MASS SPECTROMETRY</scope>
    <source>
        <tissue>Venom</tissue>
    </source>
</reference>
<protein>
    <recommendedName>
        <fullName>Bradykinin-potentiating peptide 11g</fullName>
        <shortName>BPP-11g</shortName>
    </recommendedName>
</protein>
<evidence type="ECO:0000250" key="1"/>
<evidence type="ECO:0000269" key="2">
    <source>
    </source>
</evidence>
<evidence type="ECO:0000305" key="3"/>
<accession>P0DL01</accession>
<name>BPPBG_BOTJA</name>
<comment type="function">
    <text evidence="1 2">This peptide both inhibits the activity of the angiotensin-converting enzyme (ACE) and enhances the action of bradykinin by inhibiting the peptidases that inactivate it. It acts as an indirect hypotensive agent (By similarity).</text>
</comment>
<comment type="subcellular location">
    <subcellularLocation>
        <location>Secreted</location>
    </subcellularLocation>
</comment>
<comment type="tissue specificity">
    <text>Expressed by the venom gland.</text>
</comment>
<comment type="mass spectrometry" mass="1278.7" method="Electrospray" evidence="2"/>
<comment type="similarity">
    <text evidence="3">Belongs to the bradykinin-potentiating peptide family.</text>
</comment>
<sequence length="11" mass="1297">QARPRHPKIPP</sequence>
<dbReference type="GO" id="GO:0005576">
    <property type="term" value="C:extracellular region"/>
    <property type="evidence" value="ECO:0007669"/>
    <property type="project" value="UniProtKB-SubCell"/>
</dbReference>
<dbReference type="GO" id="GO:0030414">
    <property type="term" value="F:peptidase inhibitor activity"/>
    <property type="evidence" value="ECO:0007669"/>
    <property type="project" value="UniProtKB-KW"/>
</dbReference>
<dbReference type="GO" id="GO:0090729">
    <property type="term" value="F:toxin activity"/>
    <property type="evidence" value="ECO:0007669"/>
    <property type="project" value="UniProtKB-KW"/>
</dbReference>
<dbReference type="GO" id="GO:0008217">
    <property type="term" value="P:regulation of blood pressure"/>
    <property type="evidence" value="ECO:0007669"/>
    <property type="project" value="UniProtKB-KW"/>
</dbReference>
<proteinExistence type="evidence at protein level"/>
<keyword id="KW-0903">Direct protein sequencing</keyword>
<keyword id="KW-0382">Hypotensive agent</keyword>
<keyword id="KW-0481">Metalloenzyme inhibitor</keyword>
<keyword id="KW-0483">Metalloprotease inhibitor</keyword>
<keyword id="KW-0646">Protease inhibitor</keyword>
<keyword id="KW-0873">Pyrrolidone carboxylic acid</keyword>
<keyword id="KW-0964">Secreted</keyword>
<keyword id="KW-0800">Toxin</keyword>